<name>CYBP_PONAB</name>
<gene>
    <name type="primary">CACYBP</name>
</gene>
<dbReference type="EMBL" id="CR860325">
    <property type="protein sequence ID" value="CAH92462.1"/>
    <property type="molecule type" value="mRNA"/>
</dbReference>
<dbReference type="RefSeq" id="NP_001127554.1">
    <property type="nucleotide sequence ID" value="NM_001134082.1"/>
</dbReference>
<dbReference type="BMRB" id="Q5R6Z8"/>
<dbReference type="SMR" id="Q5R6Z8"/>
<dbReference type="STRING" id="9601.ENSPPYP00000000558"/>
<dbReference type="GeneID" id="100174632"/>
<dbReference type="KEGG" id="pon:100174632"/>
<dbReference type="CTD" id="27101"/>
<dbReference type="eggNOG" id="KOG3260">
    <property type="taxonomic scope" value="Eukaryota"/>
</dbReference>
<dbReference type="InParanoid" id="Q5R6Z8"/>
<dbReference type="OrthoDB" id="164025at2759"/>
<dbReference type="Proteomes" id="UP000001595">
    <property type="component" value="Unplaced"/>
</dbReference>
<dbReference type="GO" id="GO:0005737">
    <property type="term" value="C:cytoplasm"/>
    <property type="evidence" value="ECO:0007669"/>
    <property type="project" value="UniProtKB-SubCell"/>
</dbReference>
<dbReference type="GO" id="GO:0005634">
    <property type="term" value="C:nucleus"/>
    <property type="evidence" value="ECO:0007669"/>
    <property type="project" value="UniProtKB-SubCell"/>
</dbReference>
<dbReference type="GO" id="GO:0044548">
    <property type="term" value="F:S100 protein binding"/>
    <property type="evidence" value="ECO:0007669"/>
    <property type="project" value="InterPro"/>
</dbReference>
<dbReference type="GO" id="GO:0015631">
    <property type="term" value="F:tubulin binding"/>
    <property type="evidence" value="ECO:0007669"/>
    <property type="project" value="InterPro"/>
</dbReference>
<dbReference type="GO" id="GO:0031625">
    <property type="term" value="F:ubiquitin protein ligase binding"/>
    <property type="evidence" value="ECO:0007669"/>
    <property type="project" value="InterPro"/>
</dbReference>
<dbReference type="GO" id="GO:0007507">
    <property type="term" value="P:heart development"/>
    <property type="evidence" value="ECO:0007669"/>
    <property type="project" value="TreeGrafter"/>
</dbReference>
<dbReference type="CDD" id="cd06468">
    <property type="entry name" value="p23_CacyBP"/>
    <property type="match status" value="1"/>
</dbReference>
<dbReference type="FunFam" id="2.60.40.790:FF:000006">
    <property type="entry name" value="calcyclin-binding protein-like"/>
    <property type="match status" value="1"/>
</dbReference>
<dbReference type="FunFam" id="4.10.860.10:FF:000006">
    <property type="entry name" value="calcyclin-binding protein-like"/>
    <property type="match status" value="1"/>
</dbReference>
<dbReference type="Gene3D" id="2.60.40.790">
    <property type="match status" value="1"/>
</dbReference>
<dbReference type="Gene3D" id="4.10.860.10">
    <property type="entry name" value="UVR domain"/>
    <property type="match status" value="1"/>
</dbReference>
<dbReference type="InterPro" id="IPR037201">
    <property type="entry name" value="CacyBP_N"/>
</dbReference>
<dbReference type="InterPro" id="IPR052289">
    <property type="entry name" value="Calcyclin-binding_UBL-bridge"/>
</dbReference>
<dbReference type="InterPro" id="IPR037893">
    <property type="entry name" value="CS_CacyBP"/>
</dbReference>
<dbReference type="InterPro" id="IPR007052">
    <property type="entry name" value="CS_dom"/>
</dbReference>
<dbReference type="InterPro" id="IPR008978">
    <property type="entry name" value="HSP20-like_chaperone"/>
</dbReference>
<dbReference type="InterPro" id="IPR007699">
    <property type="entry name" value="SGS_dom"/>
</dbReference>
<dbReference type="InterPro" id="IPR015120">
    <property type="entry name" value="Siah-Interact_N"/>
</dbReference>
<dbReference type="PANTHER" id="PTHR13164:SF3">
    <property type="entry name" value="CALCYCLIN-BINDING PROTEIN"/>
    <property type="match status" value="1"/>
</dbReference>
<dbReference type="PANTHER" id="PTHR13164">
    <property type="entry name" value="CALICYLIN BINDING PROTEIN"/>
    <property type="match status" value="1"/>
</dbReference>
<dbReference type="Pfam" id="PF04969">
    <property type="entry name" value="CS"/>
    <property type="match status" value="1"/>
</dbReference>
<dbReference type="Pfam" id="PF05002">
    <property type="entry name" value="SGS"/>
    <property type="match status" value="1"/>
</dbReference>
<dbReference type="Pfam" id="PF09032">
    <property type="entry name" value="Siah-Interact_N"/>
    <property type="match status" value="1"/>
</dbReference>
<dbReference type="SUPFAM" id="SSF140106">
    <property type="entry name" value="Calcyclin-binding protein-like"/>
    <property type="match status" value="1"/>
</dbReference>
<dbReference type="SUPFAM" id="SSF49764">
    <property type="entry name" value="HSP20-like chaperones"/>
    <property type="match status" value="1"/>
</dbReference>
<dbReference type="PROSITE" id="PS51203">
    <property type="entry name" value="CS"/>
    <property type="match status" value="1"/>
</dbReference>
<dbReference type="PROSITE" id="PS51048">
    <property type="entry name" value="SGS"/>
    <property type="match status" value="1"/>
</dbReference>
<protein>
    <recommendedName>
        <fullName>Calcyclin-binding protein</fullName>
        <shortName>CacyBP</shortName>
    </recommendedName>
</protein>
<proteinExistence type="evidence at transcript level"/>
<evidence type="ECO:0000250" key="1"/>
<evidence type="ECO:0000250" key="2">
    <source>
        <dbReference type="UniProtKB" id="Q9HB71"/>
    </source>
</evidence>
<evidence type="ECO:0000255" key="3">
    <source>
        <dbReference type="PROSITE-ProRule" id="PRU00386"/>
    </source>
</evidence>
<evidence type="ECO:0000255" key="4">
    <source>
        <dbReference type="PROSITE-ProRule" id="PRU00547"/>
    </source>
</evidence>
<reference key="1">
    <citation type="submission" date="2004-11" db="EMBL/GenBank/DDBJ databases">
        <authorList>
            <consortium name="The German cDNA consortium"/>
        </authorList>
    </citation>
    <scope>NUCLEOTIDE SEQUENCE [LARGE SCALE MRNA]</scope>
    <source>
        <tissue>Brain cortex</tissue>
    </source>
</reference>
<feature type="initiator methionine" description="Removed" evidence="2">
    <location>
        <position position="1"/>
    </location>
</feature>
<feature type="chain" id="PRO_0000185391" description="Calcyclin-binding protein">
    <location>
        <begin position="2"/>
        <end position="228"/>
    </location>
</feature>
<feature type="domain" description="CS" evidence="4">
    <location>
        <begin position="73"/>
        <end position="167"/>
    </location>
</feature>
<feature type="domain" description="SGS" evidence="3">
    <location>
        <begin position="168"/>
        <end position="228"/>
    </location>
</feature>
<feature type="region of interest" description="Interaction with SIAH1" evidence="1">
    <location>
        <begin position="2"/>
        <end position="80"/>
    </location>
</feature>
<feature type="region of interest" description="Interaction with SKP1" evidence="1">
    <location>
        <begin position="73"/>
        <end position="228"/>
    </location>
</feature>
<feature type="region of interest" description="Interaction with S100A6" evidence="1">
    <location>
        <begin position="154"/>
        <end position="228"/>
    </location>
</feature>
<feature type="modified residue" description="N-acetylalanine" evidence="2">
    <location>
        <position position="2"/>
    </location>
</feature>
<feature type="modified residue" description="Phosphoserine" evidence="2">
    <location>
        <position position="3"/>
    </location>
</feature>
<feature type="modified residue" description="N6-acetyllysine" evidence="2">
    <location>
        <position position="8"/>
    </location>
</feature>
<feature type="modified residue" description="N6-acetyllysine" evidence="2">
    <location>
        <position position="19"/>
    </location>
</feature>
<feature type="modified residue" description="Phosphoserine" evidence="2">
    <location>
        <position position="34"/>
    </location>
</feature>
<feature type="modified residue" description="N6-acetyllysine" evidence="2">
    <location>
        <position position="85"/>
    </location>
</feature>
<feature type="modified residue" description="N6-acetyllysine" evidence="2">
    <location>
        <position position="118"/>
    </location>
</feature>
<keyword id="KW-0007">Acetylation</keyword>
<keyword id="KW-0963">Cytoplasm</keyword>
<keyword id="KW-0539">Nucleus</keyword>
<keyword id="KW-0597">Phosphoprotein</keyword>
<keyword id="KW-1185">Reference proteome</keyword>
<keyword id="KW-0833">Ubl conjugation pathway</keyword>
<organism>
    <name type="scientific">Pongo abelii</name>
    <name type="common">Sumatran orangutan</name>
    <name type="synonym">Pongo pygmaeus abelii</name>
    <dbReference type="NCBI Taxonomy" id="9601"/>
    <lineage>
        <taxon>Eukaryota</taxon>
        <taxon>Metazoa</taxon>
        <taxon>Chordata</taxon>
        <taxon>Craniata</taxon>
        <taxon>Vertebrata</taxon>
        <taxon>Euteleostomi</taxon>
        <taxon>Mammalia</taxon>
        <taxon>Eutheria</taxon>
        <taxon>Euarchontoglires</taxon>
        <taxon>Primates</taxon>
        <taxon>Haplorrhini</taxon>
        <taxon>Catarrhini</taxon>
        <taxon>Hominidae</taxon>
        <taxon>Pongo</taxon>
    </lineage>
</organism>
<accession>Q5R6Z8</accession>
<sequence>MASEELQKDLEEVKVLLEKATRKRVRDALTAEKSKIETEIKNKMQQKSQKKAELLDNEKPAAVVAPITTGYTVKISNYGWDQSDKFVKIYITLTGVHQVPTENVQVHFTERSFDLLVKNLNGKSYSMIVNNLLKPISVEGSSKKVKTDTVLILCRKKVENTRWDYLTQVEKERKEKEKPSYDAETDPSEGLMNVLKKIYEDGDDDMKRTINKAWVESREKQAKGDTEF</sequence>
<comment type="function">
    <text evidence="1">May be involved in calcium-dependent ubiquitination and subsequent proteasomal degradation of target proteins. Probably serves as a molecular bridge in ubiquitin E3 complexes. Participates in the ubiquitin-mediated degradation of beta-catenin (CTNNB1) (By similarity).</text>
</comment>
<comment type="subunit">
    <text evidence="1">Interacts with protein of the S100 family S100A1, S100A6, S100B, S100P and S100A12 in a calcium-dependent manner. Component of some large E3 complex at least composed of UBE2D1, SIAH1, CACYBP/SIP, SKP1, APC and TBL1X. Interacts directly with SIAH1, SIAH2 and SKP1 (By similarity).</text>
</comment>
<comment type="subcellular location">
    <subcellularLocation>
        <location evidence="1">Cytoplasm</location>
    </subcellularLocation>
    <subcellularLocation>
        <location evidence="1">Nucleus</location>
    </subcellularLocation>
</comment>
<comment type="PTM">
    <text evidence="1">Phosphorylated on serine residues. Phosphorylated upon induction by RA or at high calcium concentrations (By similarity).</text>
</comment>